<proteinExistence type="inferred from homology"/>
<evidence type="ECO:0000255" key="1">
    <source>
        <dbReference type="HAMAP-Rule" id="MF_01866"/>
    </source>
</evidence>
<gene>
    <name type="ordered locus">CJA_2437</name>
</gene>
<organism>
    <name type="scientific">Cellvibrio japonicus (strain Ueda107)</name>
    <name type="common">Pseudomonas fluorescens subsp. cellulosa</name>
    <dbReference type="NCBI Taxonomy" id="498211"/>
    <lineage>
        <taxon>Bacteria</taxon>
        <taxon>Pseudomonadati</taxon>
        <taxon>Pseudomonadota</taxon>
        <taxon>Gammaproteobacteria</taxon>
        <taxon>Cellvibrionales</taxon>
        <taxon>Cellvibrionaceae</taxon>
        <taxon>Cellvibrio</taxon>
    </lineage>
</organism>
<keyword id="KW-1185">Reference proteome</keyword>
<dbReference type="EMBL" id="CP000934">
    <property type="protein sequence ID" value="ACE86070.1"/>
    <property type="molecule type" value="Genomic_DNA"/>
</dbReference>
<dbReference type="RefSeq" id="WP_012488034.1">
    <property type="nucleotide sequence ID" value="NC_010995.1"/>
</dbReference>
<dbReference type="SMR" id="B3PKG9"/>
<dbReference type="STRING" id="498211.CJA_2437"/>
<dbReference type="KEGG" id="cja:CJA_2437"/>
<dbReference type="eggNOG" id="COG3100">
    <property type="taxonomic scope" value="Bacteria"/>
</dbReference>
<dbReference type="HOGENOM" id="CLU_155118_2_0_6"/>
<dbReference type="OrthoDB" id="7062382at2"/>
<dbReference type="Proteomes" id="UP000001036">
    <property type="component" value="Chromosome"/>
</dbReference>
<dbReference type="Gene3D" id="3.10.510.20">
    <property type="entry name" value="YcgL domain"/>
    <property type="match status" value="1"/>
</dbReference>
<dbReference type="HAMAP" id="MF_01866">
    <property type="entry name" value="UPF0745"/>
    <property type="match status" value="1"/>
</dbReference>
<dbReference type="InterPro" id="IPR038068">
    <property type="entry name" value="YcgL-like_sf"/>
</dbReference>
<dbReference type="InterPro" id="IPR027354">
    <property type="entry name" value="YcgL_dom"/>
</dbReference>
<dbReference type="PANTHER" id="PTHR38109">
    <property type="entry name" value="PROTEIN YCGL"/>
    <property type="match status" value="1"/>
</dbReference>
<dbReference type="PANTHER" id="PTHR38109:SF1">
    <property type="entry name" value="PROTEIN YCGL"/>
    <property type="match status" value="1"/>
</dbReference>
<dbReference type="Pfam" id="PF05166">
    <property type="entry name" value="YcgL"/>
    <property type="match status" value="1"/>
</dbReference>
<dbReference type="SUPFAM" id="SSF160191">
    <property type="entry name" value="YcgL-like"/>
    <property type="match status" value="1"/>
</dbReference>
<dbReference type="PROSITE" id="PS51648">
    <property type="entry name" value="YCGL"/>
    <property type="match status" value="1"/>
</dbReference>
<feature type="chain" id="PRO_0000375281" description="YcgL domain-containing protein CJA_2437">
    <location>
        <begin position="1"/>
        <end position="98"/>
    </location>
</feature>
<feature type="domain" description="YcgL" evidence="1">
    <location>
        <begin position="3"/>
        <end position="87"/>
    </location>
</feature>
<reference key="1">
    <citation type="journal article" date="2008" name="J. Bacteriol.">
        <title>Insights into plant cell wall degradation from the genome sequence of the soil bacterium Cellvibrio japonicus.</title>
        <authorList>
            <person name="DeBoy R.T."/>
            <person name="Mongodin E.F."/>
            <person name="Fouts D.E."/>
            <person name="Tailford L.E."/>
            <person name="Khouri H."/>
            <person name="Emerson J.B."/>
            <person name="Mohamoud Y."/>
            <person name="Watkins K."/>
            <person name="Henrissat B."/>
            <person name="Gilbert H.J."/>
            <person name="Nelson K.E."/>
        </authorList>
    </citation>
    <scope>NUCLEOTIDE SEQUENCE [LARGE SCALE GENOMIC DNA]</scope>
    <source>
        <strain>Ueda107</strain>
    </source>
</reference>
<sequence>MKIIAEIYRSPKEEGMYLYVKKEEGLGRVPEELLTLFGKPQQAMVLLLTPEKKLANADIGKVIESLNDKGYYLQLPPRDLVDAEAKRIRTLNSKLSGH</sequence>
<accession>B3PKG9</accession>
<name>Y2437_CELJU</name>
<protein>
    <recommendedName>
        <fullName evidence="1">YcgL domain-containing protein CJA_2437</fullName>
    </recommendedName>
</protein>